<gene>
    <name evidence="15" type="primary">Eif4ebp2</name>
</gene>
<protein>
    <recommendedName>
        <fullName evidence="1">Eukaryotic translation initiation factor 4E-binding protein 2</fullName>
        <shortName evidence="1">4E-BP2</shortName>
        <shortName evidence="1">eIF4E-binding protein 2</shortName>
    </recommendedName>
    <alternativeName>
        <fullName evidence="13">Phosphorylated heat- and acid-stable protein regulated by insulin 2</fullName>
        <shortName evidence="13">PHAS-II</shortName>
    </alternativeName>
</protein>
<evidence type="ECO:0000250" key="1">
    <source>
        <dbReference type="UniProtKB" id="Q13542"/>
    </source>
</evidence>
<evidence type="ECO:0000269" key="2">
    <source>
    </source>
</evidence>
<evidence type="ECO:0000269" key="3">
    <source>
    </source>
</evidence>
<evidence type="ECO:0000269" key="4">
    <source>
    </source>
</evidence>
<evidence type="ECO:0000269" key="5">
    <source>
    </source>
</evidence>
<evidence type="ECO:0000269" key="6">
    <source>
    </source>
</evidence>
<evidence type="ECO:0000269" key="7">
    <source>
    </source>
</evidence>
<evidence type="ECO:0000269" key="8">
    <source>
    </source>
</evidence>
<evidence type="ECO:0000269" key="9">
    <source>
    </source>
</evidence>
<evidence type="ECO:0000269" key="10">
    <source>
    </source>
</evidence>
<evidence type="ECO:0000269" key="11">
    <source>
    </source>
</evidence>
<evidence type="ECO:0000269" key="12">
    <source>
    </source>
</evidence>
<evidence type="ECO:0000303" key="13">
    <source>
    </source>
</evidence>
<evidence type="ECO:0000305" key="14"/>
<evidence type="ECO:0000312" key="15">
    <source>
        <dbReference type="MGI" id="MGI:109198"/>
    </source>
</evidence>
<evidence type="ECO:0007744" key="16">
    <source>
    </source>
</evidence>
<dbReference type="EMBL" id="U75530">
    <property type="protein sequence ID" value="AAC52899.1"/>
    <property type="molecule type" value="mRNA"/>
</dbReference>
<dbReference type="EMBL" id="BC015082">
    <property type="protein sequence ID" value="AAH15082.1"/>
    <property type="molecule type" value="mRNA"/>
</dbReference>
<dbReference type="CCDS" id="CCDS23879.1"/>
<dbReference type="RefSeq" id="NP_034254.1">
    <property type="nucleotide sequence ID" value="NM_010124.2"/>
</dbReference>
<dbReference type="RefSeq" id="XP_017169281.1">
    <property type="nucleotide sequence ID" value="XM_017313792.1"/>
</dbReference>
<dbReference type="RefSeq" id="XP_017169282.1">
    <property type="nucleotide sequence ID" value="XM_017313793.1"/>
</dbReference>
<dbReference type="SMR" id="P70445"/>
<dbReference type="BioGRID" id="199422">
    <property type="interactions" value="5"/>
</dbReference>
<dbReference type="DIP" id="DIP-60124N"/>
<dbReference type="FunCoup" id="P70445">
    <property type="interactions" value="279"/>
</dbReference>
<dbReference type="IntAct" id="P70445">
    <property type="interactions" value="1"/>
</dbReference>
<dbReference type="STRING" id="10090.ENSMUSP00000020288"/>
<dbReference type="GlyGen" id="P70445">
    <property type="glycosylation" value="1 site, 1 O-linked glycan (1 site)"/>
</dbReference>
<dbReference type="iPTMnet" id="P70445"/>
<dbReference type="PhosphoSitePlus" id="P70445"/>
<dbReference type="jPOST" id="P70445"/>
<dbReference type="PaxDb" id="10090-ENSMUSP00000020288"/>
<dbReference type="PeptideAtlas" id="P70445"/>
<dbReference type="ProteomicsDB" id="296446"/>
<dbReference type="Pumba" id="P70445"/>
<dbReference type="Antibodypedia" id="29025">
    <property type="antibodies" value="273 antibodies from 29 providers"/>
</dbReference>
<dbReference type="DNASU" id="13688"/>
<dbReference type="Ensembl" id="ENSMUST00000020288.15">
    <property type="protein sequence ID" value="ENSMUSP00000020288.8"/>
    <property type="gene ID" value="ENSMUSG00000020091.17"/>
</dbReference>
<dbReference type="GeneID" id="13688"/>
<dbReference type="KEGG" id="mmu:13688"/>
<dbReference type="UCSC" id="uc007fga.1">
    <property type="organism name" value="mouse"/>
</dbReference>
<dbReference type="AGR" id="MGI:109198"/>
<dbReference type="CTD" id="1979"/>
<dbReference type="MGI" id="MGI:109198">
    <property type="gene designation" value="Eif4ebp2"/>
</dbReference>
<dbReference type="VEuPathDB" id="HostDB:ENSMUSG00000020091"/>
<dbReference type="eggNOG" id="ENOG502S44S">
    <property type="taxonomic scope" value="Eukaryota"/>
</dbReference>
<dbReference type="GeneTree" id="ENSGT00940000155342"/>
<dbReference type="HOGENOM" id="CLU_111706_0_0_1"/>
<dbReference type="InParanoid" id="P70445"/>
<dbReference type="OMA" id="PMMTRKI"/>
<dbReference type="OrthoDB" id="19729at2759"/>
<dbReference type="PhylomeDB" id="P70445"/>
<dbReference type="TreeFam" id="TF101530"/>
<dbReference type="BioGRID-ORCS" id="13688">
    <property type="hits" value="3 hits in 76 CRISPR screens"/>
</dbReference>
<dbReference type="ChiTaRS" id="Eif4ebp2">
    <property type="organism name" value="mouse"/>
</dbReference>
<dbReference type="PRO" id="PR:P70445"/>
<dbReference type="Proteomes" id="UP000000589">
    <property type="component" value="Chromosome 10"/>
</dbReference>
<dbReference type="RNAct" id="P70445">
    <property type="molecule type" value="protein"/>
</dbReference>
<dbReference type="Bgee" id="ENSMUSG00000020091">
    <property type="expression patterns" value="Expressed in extensor digitorum longus and 264 other cell types or tissues"/>
</dbReference>
<dbReference type="ExpressionAtlas" id="P70445">
    <property type="expression patterns" value="baseline and differential"/>
</dbReference>
<dbReference type="GO" id="GO:0071598">
    <property type="term" value="C:neuronal ribonucleoprotein granule"/>
    <property type="evidence" value="ECO:0007669"/>
    <property type="project" value="Ensembl"/>
</dbReference>
<dbReference type="GO" id="GO:0005634">
    <property type="term" value="C:nucleus"/>
    <property type="evidence" value="ECO:0007669"/>
    <property type="project" value="UniProtKB-SubCell"/>
</dbReference>
<dbReference type="GO" id="GO:0098794">
    <property type="term" value="C:postsynapse"/>
    <property type="evidence" value="ECO:0007669"/>
    <property type="project" value="Ensembl"/>
</dbReference>
<dbReference type="GO" id="GO:0008190">
    <property type="term" value="F:eukaryotic initiation factor 4E binding"/>
    <property type="evidence" value="ECO:0000315"/>
    <property type="project" value="UniProtKB"/>
</dbReference>
<dbReference type="GO" id="GO:0030371">
    <property type="term" value="F:translation repressor activity"/>
    <property type="evidence" value="ECO:0000315"/>
    <property type="project" value="UniProtKB"/>
</dbReference>
<dbReference type="GO" id="GO:0008286">
    <property type="term" value="P:insulin receptor signaling pathway"/>
    <property type="evidence" value="ECO:0000314"/>
    <property type="project" value="MGI"/>
</dbReference>
<dbReference type="GO" id="GO:0007613">
    <property type="term" value="P:memory"/>
    <property type="evidence" value="ECO:0000315"/>
    <property type="project" value="UniProtKB"/>
</dbReference>
<dbReference type="GO" id="GO:0050804">
    <property type="term" value="P:modulation of chemical synaptic transmission"/>
    <property type="evidence" value="ECO:0000314"/>
    <property type="project" value="UniProtKB"/>
</dbReference>
<dbReference type="GO" id="GO:0045947">
    <property type="term" value="P:negative regulation of translational initiation"/>
    <property type="evidence" value="ECO:0000315"/>
    <property type="project" value="UniProtKB"/>
</dbReference>
<dbReference type="GO" id="GO:0048167">
    <property type="term" value="P:regulation of synaptic plasticity"/>
    <property type="evidence" value="ECO:0000315"/>
    <property type="project" value="UniProtKB"/>
</dbReference>
<dbReference type="GO" id="GO:0006446">
    <property type="term" value="P:regulation of translational initiation"/>
    <property type="evidence" value="ECO:0000304"/>
    <property type="project" value="MGI"/>
</dbReference>
<dbReference type="GO" id="GO:0035176">
    <property type="term" value="P:social behavior"/>
    <property type="evidence" value="ECO:0000315"/>
    <property type="project" value="UniProtKB"/>
</dbReference>
<dbReference type="GO" id="GO:0031929">
    <property type="term" value="P:TOR signaling"/>
    <property type="evidence" value="ECO:0000314"/>
    <property type="project" value="MGI"/>
</dbReference>
<dbReference type="InterPro" id="IPR008606">
    <property type="entry name" value="EIF4EBP"/>
</dbReference>
<dbReference type="PANTHER" id="PTHR12669">
    <property type="entry name" value="EUKARYOTIC TRANSLATION INITIATION FACTOR 4E-BINDING PROTEIN"/>
    <property type="match status" value="1"/>
</dbReference>
<dbReference type="PANTHER" id="PTHR12669:SF4">
    <property type="entry name" value="EUKARYOTIC TRANSLATION INITIATION FACTOR 4E-BINDING PROTEIN 2"/>
    <property type="match status" value="1"/>
</dbReference>
<dbReference type="Pfam" id="PF05456">
    <property type="entry name" value="eIF_4EBP"/>
    <property type="match status" value="1"/>
</dbReference>
<feature type="chain" id="PRO_0000190517" description="Eukaryotic translation initiation factor 4E-binding protein 2">
    <location>
        <begin position="1"/>
        <end position="120"/>
    </location>
</feature>
<feature type="short sequence motif" description="YXXXXLphi motif" evidence="1">
    <location>
        <begin position="54"/>
        <end position="60"/>
    </location>
</feature>
<feature type="short sequence motif" description="TOS motif" evidence="7">
    <location>
        <begin position="116"/>
        <end position="120"/>
    </location>
</feature>
<feature type="modified residue" description="Phosphothreonine; by MTOR" evidence="7 16">
    <location>
        <position position="37"/>
    </location>
</feature>
<feature type="modified residue" description="Phosphothreonine; by MTOR" evidence="7 16">
    <location>
        <position position="46"/>
    </location>
</feature>
<feature type="modified residue" description="Phosphoserine; by MTOR" evidence="7 16">
    <location>
        <position position="65"/>
    </location>
</feature>
<feature type="modified residue" description="Phosphothreonine; by MTOR" evidence="7 16">
    <location>
        <position position="70"/>
    </location>
</feature>
<feature type="modified residue" description="Phosphoserine" evidence="1">
    <location>
        <position position="83"/>
    </location>
</feature>
<feature type="modified residue" description="Deamidated asparagine" evidence="7 8">
    <location>
        <position position="99"/>
    </location>
</feature>
<feature type="modified residue" description="Deamidated asparagine" evidence="7 8">
    <location>
        <position position="102"/>
    </location>
</feature>
<feature type="mutagenesis site" description="Impaired hyperphosphorylation." evidence="7">
    <original>T</original>
    <variation>A</variation>
    <location>
        <position position="37"/>
    </location>
</feature>
<feature type="mutagenesis site" description="Impaired hyperphosphorylation." evidence="7">
    <original>T</original>
    <variation>A</variation>
    <location>
        <position position="46"/>
    </location>
</feature>
<feature type="mutagenesis site" description="Does not greatlay affect hyperphosphorylation." evidence="7">
    <original>T</original>
    <variation>A</variation>
    <location>
        <position position="70"/>
    </location>
</feature>
<feature type="mutagenesis site" description="Abolishes deamidation and impaired interaction with RPTOR." evidence="7">
    <original>NNLN</original>
    <variation>ANLA</variation>
    <location>
        <begin position="99"/>
        <end position="102"/>
    </location>
</feature>
<feature type="mutagenesis site" description="Increased interaction with RPTOR." evidence="7">
    <original>NNLN</original>
    <variation>DNLD</variation>
    <location>
        <begin position="99"/>
        <end position="102"/>
    </location>
</feature>
<feature type="mutagenesis site" description="Abolishes interaction with RPTOR." evidence="7">
    <location>
        <begin position="116"/>
        <end position="120"/>
    </location>
</feature>
<reference key="1">
    <citation type="journal article" date="1996" name="J. Biol. Chem.">
        <title>Control of the translational regulators PHAS-I and PHAS-II by insulin and cAMP in 3T3-L1 adipocytes.</title>
        <authorList>
            <person name="Lin T.A."/>
            <person name="Lawrence J.C. Jr."/>
        </authorList>
    </citation>
    <scope>NUCLEOTIDE SEQUENCE [MRNA]</scope>
    <scope>FUNCTION</scope>
</reference>
<reference key="2">
    <citation type="journal article" date="2004" name="Genome Res.">
        <title>The status, quality, and expansion of the NIH full-length cDNA project: the Mammalian Gene Collection (MGC).</title>
        <authorList>
            <consortium name="The MGC Project Team"/>
        </authorList>
    </citation>
    <scope>NUCLEOTIDE SEQUENCE [LARGE SCALE MRNA]</scope>
    <source>
        <tissue>Colon</tissue>
    </source>
</reference>
<reference key="3">
    <citation type="journal article" date="2005" name="J. Neurosci.">
        <title>The translation repressor 4E-BP2 is critical for eIF4F complex formation, synaptic plasticity, and memory in the hippocampus.</title>
        <authorList>
            <person name="Banko J.L."/>
            <person name="Poulin F."/>
            <person name="Hou L."/>
            <person name="DeMaria C.T."/>
            <person name="Sonenberg N."/>
            <person name="Klann E."/>
        </authorList>
    </citation>
    <scope>FUNCTION</scope>
    <scope>DISRUPTION PHENOTYPE</scope>
    <scope>TISSUE SPECIFICITY</scope>
</reference>
<reference key="4">
    <citation type="journal article" date="2007" name="J. Clin. Invest.">
        <title>Elevated sensitivity to diet-induced obesity and insulin resistance in mice lacking 4E-BP1 and 4E-BP2.</title>
        <authorList>
            <person name="Le Bacquer O."/>
            <person name="Petroulakis E."/>
            <person name="Paglialunga S."/>
            <person name="Poulin F."/>
            <person name="Richard D."/>
            <person name="Cianflone K."/>
            <person name="Sonenberg N."/>
        </authorList>
    </citation>
    <scope>DISRUPTION PHENOTYPE</scope>
</reference>
<reference key="5">
    <citation type="journal article" date="2007" name="Neurobiol. Learn. Mem.">
        <title>Behavioral alterations in mice lacking the translation repressor 4E-BP2.</title>
        <authorList>
            <person name="Banko J.L."/>
            <person name="Merhav M."/>
            <person name="Stern E."/>
            <person name="Sonenberg N."/>
            <person name="Rosenblum K."/>
            <person name="Klann E."/>
        </authorList>
    </citation>
    <scope>FUNCTION</scope>
    <scope>DISRUPTION PHENOTYPE</scope>
</reference>
<reference key="6">
    <citation type="journal article" date="2008" name="RNA">
        <title>Control of eIF4E cellular localization by eIF4E-binding proteins, 4E-BPs.</title>
        <authorList>
            <person name="Rong L."/>
            <person name="Livingstone M."/>
            <person name="Sukarieh R."/>
            <person name="Petroulakis E."/>
            <person name="Gingras A.C."/>
            <person name="Crosby K."/>
            <person name="Smith B."/>
            <person name="Polakiewicz R.D."/>
            <person name="Pelletier J."/>
            <person name="Ferraiuolo M.A."/>
            <person name="Sonenberg N."/>
        </authorList>
    </citation>
    <scope>SUBCELLULAR LOCATION</scope>
</reference>
<reference key="7">
    <citation type="journal article" date="2009" name="Immunology">
        <title>Impaired myelopoiesis in mice lacking the repressors of translation initiation, 4E-BP1 and 4E-BP2.</title>
        <authorList>
            <person name="Olson K.E."/>
            <person name="Booth G.C."/>
            <person name="Poulin F."/>
            <person name="Sonenberg N."/>
            <person name="Beretta L."/>
        </authorList>
    </citation>
    <scope>DISRUPTION PHENOTYPE</scope>
</reference>
<reference key="8">
    <citation type="journal article" date="2010" name="Cell">
        <title>A tissue-specific atlas of mouse protein phosphorylation and expression.</title>
        <authorList>
            <person name="Huttlin E.L."/>
            <person name="Jedrychowski M.P."/>
            <person name="Elias J.E."/>
            <person name="Goswami T."/>
            <person name="Rad R."/>
            <person name="Beausoleil S.A."/>
            <person name="Villen J."/>
            <person name="Haas W."/>
            <person name="Sowa M.E."/>
            <person name="Gygi S.P."/>
        </authorList>
    </citation>
    <scope>PHOSPHORYLATION [LARGE SCALE ANALYSIS] AT THR-37; THR-46; SER-65 AND THR-70</scope>
    <scope>IDENTIFICATION BY MASS SPECTROMETRY [LARGE SCALE ANALYSIS]</scope>
    <source>
        <tissue>Brain</tissue>
        <tissue>Brown adipose tissue</tissue>
        <tissue>Heart</tissue>
        <tissue>Kidney</tissue>
        <tissue>Liver</tissue>
        <tissue>Lung</tissue>
        <tissue>Pancreas</tissue>
        <tissue>Spleen</tissue>
        <tissue>Testis</tissue>
    </source>
</reference>
<reference key="9">
    <citation type="journal article" date="2010" name="J. Biol. Chem.">
        <title>Repair of isoaspartate formation modulates the interaction of deamidated 4E-BP2 with mTORC1 in brain.</title>
        <authorList>
            <person name="Bidinosti M."/>
            <person name="Martineau Y."/>
            <person name="Frank F."/>
            <person name="Sonenberg N."/>
        </authorList>
    </citation>
    <scope>DEAMIDATION AT ASN-99 AND ASN-102</scope>
    <scope>INTERACTION WITH PCMT1</scope>
</reference>
<reference key="10">
    <citation type="journal article" date="2010" name="Mol. Cell">
        <title>Postnatal deamidation of 4E-BP2 in brain enhances its association with raptor and alters kinetics of excitatory synaptic transmission.</title>
        <authorList>
            <person name="Bidinosti M."/>
            <person name="Ran I."/>
            <person name="Sanchez-Carbente M.R."/>
            <person name="Martineau Y."/>
            <person name="Gingras A.C."/>
            <person name="Gkogkas C."/>
            <person name="Raught B."/>
            <person name="Bramham C.R."/>
            <person name="Sossin W.S."/>
            <person name="Costa-Mattioli M."/>
            <person name="DesGroseillers L."/>
            <person name="Lacaille J.C."/>
            <person name="Sonenberg N."/>
        </authorList>
    </citation>
    <scope>FUNCTION</scope>
    <scope>DEAMIDATION AT ASN-99 AND ASN-102</scope>
    <scope>PHOSPHORYLATION AT THR-37; THR-46; SER-65 AND THR-70</scope>
    <scope>DOMAIN TOS</scope>
    <scope>INTERACTION WITH RPTOR</scope>
    <scope>MUTAGENESIS OF THR-37; THR-46; THR-70; 99-ASN--ASN-102 AND 116-PHE--ILE-120</scope>
</reference>
<reference key="11">
    <citation type="journal article" date="2013" name="Cell Rep.">
        <title>mTORC1 targets the translational repressor 4E-BP2, but not S6 kinase 1/2, to regulate neural stem cell self-renewal in vivo.</title>
        <authorList>
            <person name="Hartman N.W."/>
            <person name="Lin T.V."/>
            <person name="Zhang L."/>
            <person name="Paquelet G.E."/>
            <person name="Feliciano D.M."/>
            <person name="Bordey A."/>
        </authorList>
    </citation>
    <scope>FUNCTION</scope>
    <scope>PHOSPHORYLATION</scope>
</reference>
<reference key="12">
    <citation type="journal article" date="2013" name="J. Biol. Chem.">
        <title>Mechanistic target of rapamycin complex 1 (mTORC1)-mediated phosphorylation is governed by competition between substrates for interaction with raptor.</title>
        <authorList>
            <person name="Dennis M.D."/>
            <person name="Kimball S.R."/>
            <person name="Jefferson L.S."/>
        </authorList>
    </citation>
    <scope>INTERACTION WITH RPTOR</scope>
</reference>
<reference key="13">
    <citation type="journal article" date="2013" name="Nature">
        <title>Autism-related deficits via dysregulated eIF4E-dependent translational control.</title>
        <authorList>
            <person name="Gkogkas C.G."/>
            <person name="Khoutorsky A."/>
            <person name="Ran I."/>
            <person name="Rampakakis E."/>
            <person name="Nevarko T."/>
            <person name="Weatherill D.B."/>
            <person name="Vasuta C."/>
            <person name="Yee S."/>
            <person name="Truitt M."/>
            <person name="Dallaire P."/>
            <person name="Major F."/>
            <person name="Lasko P."/>
            <person name="Ruggero D."/>
            <person name="Nader K."/>
            <person name="Lacaille J.C."/>
            <person name="Sonenberg N."/>
        </authorList>
    </citation>
    <scope>FUNCTION</scope>
    <scope>DISRUPTION PHENOTYPE</scope>
</reference>
<keyword id="KW-0963">Cytoplasm</keyword>
<keyword id="KW-0539">Nucleus</keyword>
<keyword id="KW-0597">Phosphoprotein</keyword>
<keyword id="KW-0652">Protein synthesis inhibitor</keyword>
<keyword id="KW-1185">Reference proteome</keyword>
<keyword id="KW-0810">Translation regulation</keyword>
<name>4EBP2_MOUSE</name>
<sequence>MSASAGGSHQPSQSRAIPTRTVAISDAAQLPQDYCTTPGGTLFSTTPGGTRIIYDRKFLLDRRNSPMAQTPPCHLPNIPGVTSPGALIEDSKVEVNNLNNLNNHDRKHAVGDEAQFEMDI</sequence>
<accession>P70445</accession>
<comment type="function">
    <text evidence="1 2 3 7 9 11 12">Repressor of translation initiation involved in synaptic plasticity, learning and memory formation (PubMed:16237163, PubMed:17029989). Regulates EIF4E activity by preventing its assembly into the eIF4F complex: hypophosphorylated form of EIF4EBP2 competes with EIF4G1/EIF4G3 and strongly binds to EIF4E, leading to repress translation. In contrast, hyperphosphorylated form dissociates from EIF4E, allowing interaction between EIF4G1/EIF4G3 and EIF4E, leading to initiation of translation (PubMed:17029989, PubMed:20347422, PubMed:23172145). EIF4EBP2 is enriched in brain and acts as a regulator of synapse activity and neuronal stem cell renewal via its ability to repress translation initiation (PubMed:20347422, PubMed:23172145, PubMed:24139800). Mediates the regulation of protein translation by hormones, growth factors and other stimuli that signal through the MAP kinase and mTORC1 pathways (PubMed:8939971).</text>
</comment>
<comment type="subunit">
    <text evidence="1 7 8 10">Hypophosphorylated EIF4EBP2 interacts with EIF4E; phosphorylation of EIF4EBP2 by mTORC1 causes dissociation of the complex allowing EIF4G1/EIF4G3 to bind and consequent initiation of translation. Interacts (via TOS motif) with RPTOR; promoting phosphorylation by mTORC1 (PubMed:20347422, PubMed:23184952). Interacts with PCMT1; required to prevent isoaspartate accumulation and convert isoaspartate to Asp (PubMed:20424163).</text>
</comment>
<comment type="subcellular location">
    <subcellularLocation>
        <location evidence="5">Cytoplasm</location>
    </subcellularLocation>
    <subcellularLocation>
        <location evidence="5">Nucleus</location>
    </subcellularLocation>
</comment>
<comment type="tissue specificity">
    <text evidence="2">Enriched in brain.</text>
</comment>
<comment type="domain">
    <text evidence="7">The TOS motif mediates interaction with RPTOR, leading to promote phosphorylation by mTORC1 complex.</text>
</comment>
<comment type="domain">
    <text evidence="1">Intrinsically disordered protein that undergoes folding upon phosphorylation. Hypophosphorylated form interacts strongly with EIF4E using (1) the YXXXXLPhi motif, that undergoes a disorder-to-helix transition upon binding and (2) the secondary EIF4E binding sites (residues 78-82). Phosphorylation at Thr-37 and Thr-46 induces folding of region encompassing residues from Pro-18 to Arg-62 of into a four-stranded beta-domain that sequesters the helical YXXXXLPhi motif into a buried beta-strand, blocking accessibility to EIF4E. Protein phosphorylated at Thr-37 and Thr-46 is however unstable and subsequent phosphorylation at Ser-65, Thr-70 and Ser-83 is required to stabilize the fold, decreasing affinity for EIF4E by a factor of 4000.</text>
</comment>
<comment type="PTM">
    <text evidence="1 11">Phosphorylation at Thr-37, Thr-46, Ser-65, Thr-70 and Ser-83 is mediated by MTOR and corresponds to the hyperphosphorylated form: it abolishes binding to EIF4E by inducing folding of intrinsically disordered regions. First phosphorylated at Thr-37 and Thr-46 by MTOR, inducing folding of region encompassing residues from Pro-18 to Arg-62 of into a four-stranded beta-domain that sequesters the helical YXXXXLPhi motif into a partly buried beta-strand, blocking accessibility to EIF4E. Protein phosphorylated at Thr-37 and Thr-46 is however unstable and subsequent phosphorylation at Ser-65, Thr-70 and Ser-83 is required to stabilize the fold, decreasing affinity for EIF4E by a factor of 4000. Phosphorylated in response to insulin, EGF and PDGF.</text>
</comment>
<comment type="PTM">
    <text evidence="7 8">Deamidated at Asn-99 and Asn-102 to aspartate (Asp) in brain. Deamidation promotes interaction with RPTOR, subsequent phosphorylation by mTORC1 and increased translation, leading to impair kinetics of excitatory synaptic transmission. Deamidation takes place during postnatal development, when the PI3K-Akt-mTOR signaling is reduced, suggesting it acts as a compensatory mechanism to promote translation despite attenuated PI3K-Akt-mTOR signaling in neuron development (PubMed:20347422). Deamidation converts Asn residues into a mixture of Asp and isoaspartate; interactions with PCMT1 is required to prevent isoaspartate accumulation and convert isoaspartate to Asp (PubMed:20424163).</text>
</comment>
<comment type="disruption phenotype">
    <text evidence="2 3 4 6 9">Mice develop normally and are fertile. They however show defects in synaptic plasticity, impaired spatial learning and memory and conditioned fear-associative memory deficits (PubMed:16237163). Mice show behavior defects and autistic-like phenotype, characterized by social interaction deficits, altered communication and repetitive/stereotyped behaviors: they show an increased ratio of excitatory to inhibitory synaptic inputs possibly due to increased translation of neuroligin family proteins (PubMed:17029989, PubMed:23172145). Mice lacking both Eif4ebp1 and Eif4ebp2 display increased their sensitivity to diet-induced obesity (PubMed:17273556). Mice lacking both Eif4ebp1 and Eif4ebp2 show defects in myelopoiesis: mice display an increased number of immature granulocytic precursors, associated with a decreased number of mature granulocytic elements (PubMed:19175792).</text>
</comment>
<comment type="similarity">
    <text evidence="14">Belongs to the eIF4E-binding protein family.</text>
</comment>
<organism>
    <name type="scientific">Mus musculus</name>
    <name type="common">Mouse</name>
    <dbReference type="NCBI Taxonomy" id="10090"/>
    <lineage>
        <taxon>Eukaryota</taxon>
        <taxon>Metazoa</taxon>
        <taxon>Chordata</taxon>
        <taxon>Craniata</taxon>
        <taxon>Vertebrata</taxon>
        <taxon>Euteleostomi</taxon>
        <taxon>Mammalia</taxon>
        <taxon>Eutheria</taxon>
        <taxon>Euarchontoglires</taxon>
        <taxon>Glires</taxon>
        <taxon>Rodentia</taxon>
        <taxon>Myomorpha</taxon>
        <taxon>Muroidea</taxon>
        <taxon>Muridae</taxon>
        <taxon>Murinae</taxon>
        <taxon>Mus</taxon>
        <taxon>Mus</taxon>
    </lineage>
</organism>
<proteinExistence type="evidence at protein level"/>